<dbReference type="EC" id="3.5.2.9" evidence="1"/>
<dbReference type="EMBL" id="AE003853">
    <property type="protein sequence ID" value="AAF96674.1"/>
    <property type="molecule type" value="Genomic_DNA"/>
</dbReference>
<dbReference type="PIR" id="H82419">
    <property type="entry name" value="H82419"/>
</dbReference>
<dbReference type="RefSeq" id="NP_233162.1">
    <property type="nucleotide sequence ID" value="NC_002506.1"/>
</dbReference>
<dbReference type="RefSeq" id="WP_001882609.1">
    <property type="nucleotide sequence ID" value="NZ_LT906615.1"/>
</dbReference>
<dbReference type="SMR" id="Q9KLG8"/>
<dbReference type="STRING" id="243277.VC_A0776"/>
<dbReference type="DNASU" id="2612752"/>
<dbReference type="EnsemblBacteria" id="AAF96674">
    <property type="protein sequence ID" value="AAF96674"/>
    <property type="gene ID" value="VC_A0776"/>
</dbReference>
<dbReference type="KEGG" id="vch:VC_A0776"/>
<dbReference type="PATRIC" id="fig|243277.26.peg.3399"/>
<dbReference type="eggNOG" id="COG1540">
    <property type="taxonomic scope" value="Bacteria"/>
</dbReference>
<dbReference type="HOGENOM" id="CLU_069535_0_0_6"/>
<dbReference type="Proteomes" id="UP000000584">
    <property type="component" value="Chromosome 2"/>
</dbReference>
<dbReference type="GO" id="GO:0017168">
    <property type="term" value="F:5-oxoprolinase (ATP-hydrolyzing) activity"/>
    <property type="evidence" value="ECO:0007669"/>
    <property type="project" value="UniProtKB-UniRule"/>
</dbReference>
<dbReference type="GO" id="GO:0005524">
    <property type="term" value="F:ATP binding"/>
    <property type="evidence" value="ECO:0007669"/>
    <property type="project" value="UniProtKB-UniRule"/>
</dbReference>
<dbReference type="GO" id="GO:0005975">
    <property type="term" value="P:carbohydrate metabolic process"/>
    <property type="evidence" value="ECO:0007669"/>
    <property type="project" value="InterPro"/>
</dbReference>
<dbReference type="CDD" id="cd10787">
    <property type="entry name" value="LamB_YcsF_like"/>
    <property type="match status" value="1"/>
</dbReference>
<dbReference type="Gene3D" id="3.20.20.370">
    <property type="entry name" value="Glycoside hydrolase/deacetylase"/>
    <property type="match status" value="1"/>
</dbReference>
<dbReference type="HAMAP" id="MF_00691">
    <property type="entry name" value="PxpA"/>
    <property type="match status" value="1"/>
</dbReference>
<dbReference type="InterPro" id="IPR011330">
    <property type="entry name" value="Glyco_hydro/deAcase_b/a-brl"/>
</dbReference>
<dbReference type="InterPro" id="IPR005501">
    <property type="entry name" value="LamB/YcsF/PxpA-like"/>
</dbReference>
<dbReference type="NCBIfam" id="NF003814">
    <property type="entry name" value="PRK05406.1-3"/>
    <property type="match status" value="1"/>
</dbReference>
<dbReference type="NCBIfam" id="NF003816">
    <property type="entry name" value="PRK05406.1-5"/>
    <property type="match status" value="1"/>
</dbReference>
<dbReference type="PANTHER" id="PTHR30292:SF0">
    <property type="entry name" value="5-OXOPROLINASE SUBUNIT A"/>
    <property type="match status" value="1"/>
</dbReference>
<dbReference type="PANTHER" id="PTHR30292">
    <property type="entry name" value="UNCHARACTERIZED PROTEIN YBGL-RELATED"/>
    <property type="match status" value="1"/>
</dbReference>
<dbReference type="Pfam" id="PF03746">
    <property type="entry name" value="LamB_YcsF"/>
    <property type="match status" value="1"/>
</dbReference>
<dbReference type="SUPFAM" id="SSF88713">
    <property type="entry name" value="Glycoside hydrolase/deacetylase"/>
    <property type="match status" value="1"/>
</dbReference>
<accession>Q9KLG8</accession>
<reference key="1">
    <citation type="journal article" date="2000" name="Nature">
        <title>DNA sequence of both chromosomes of the cholera pathogen Vibrio cholerae.</title>
        <authorList>
            <person name="Heidelberg J.F."/>
            <person name="Eisen J.A."/>
            <person name="Nelson W.C."/>
            <person name="Clayton R.A."/>
            <person name="Gwinn M.L."/>
            <person name="Dodson R.J."/>
            <person name="Haft D.H."/>
            <person name="Hickey E.K."/>
            <person name="Peterson J.D."/>
            <person name="Umayam L.A."/>
            <person name="Gill S.R."/>
            <person name="Nelson K.E."/>
            <person name="Read T.D."/>
            <person name="Tettelin H."/>
            <person name="Richardson D.L."/>
            <person name="Ermolaeva M.D."/>
            <person name="Vamathevan J.J."/>
            <person name="Bass S."/>
            <person name="Qin H."/>
            <person name="Dragoi I."/>
            <person name="Sellers P."/>
            <person name="McDonald L.A."/>
            <person name="Utterback T.R."/>
            <person name="Fleischmann R.D."/>
            <person name="Nierman W.C."/>
            <person name="White O."/>
            <person name="Salzberg S.L."/>
            <person name="Smith H.O."/>
            <person name="Colwell R.R."/>
            <person name="Mekalanos J.J."/>
            <person name="Venter J.C."/>
            <person name="Fraser C.M."/>
        </authorList>
    </citation>
    <scope>NUCLEOTIDE SEQUENCE [LARGE SCALE GENOMIC DNA]</scope>
    <source>
        <strain>ATCC 39315 / El Tor Inaba N16961</strain>
    </source>
</reference>
<protein>
    <recommendedName>
        <fullName evidence="1">5-oxoprolinase subunit A</fullName>
        <shortName evidence="1">5-OPase subunit A</shortName>
        <ecNumber evidence="1">3.5.2.9</ecNumber>
    </recommendedName>
    <alternativeName>
        <fullName evidence="1">5-oxoprolinase (ATP-hydrolyzing) subunit A</fullName>
    </alternativeName>
</protein>
<comment type="function">
    <text evidence="1">Catalyzes the cleavage of 5-oxoproline to form L-glutamate coupled to the hydrolysis of ATP to ADP and inorganic phosphate.</text>
</comment>
<comment type="catalytic activity">
    <reaction evidence="1">
        <text>5-oxo-L-proline + ATP + 2 H2O = L-glutamate + ADP + phosphate + H(+)</text>
        <dbReference type="Rhea" id="RHEA:10348"/>
        <dbReference type="ChEBI" id="CHEBI:15377"/>
        <dbReference type="ChEBI" id="CHEBI:15378"/>
        <dbReference type="ChEBI" id="CHEBI:29985"/>
        <dbReference type="ChEBI" id="CHEBI:30616"/>
        <dbReference type="ChEBI" id="CHEBI:43474"/>
        <dbReference type="ChEBI" id="CHEBI:58402"/>
        <dbReference type="ChEBI" id="CHEBI:456216"/>
        <dbReference type="EC" id="3.5.2.9"/>
    </reaction>
</comment>
<comment type="subunit">
    <text evidence="1">Forms a complex composed of PxpA, PxpB and PxpC.</text>
</comment>
<comment type="similarity">
    <text evidence="1">Belongs to the LamB/PxpA family.</text>
</comment>
<name>PXPA_VIBCH</name>
<sequence>MSKRTIQLNCDMGESFGVWTMGADEEVMPWIDMANIACGFHASDPHVMSRTIDLALEHEVMIGAHPSYPDLQGFGRRSLAMNEQEVSEIILYQVGALKALCESKNGQLSYVKPHGALYNDMMSDPSIFRAVVDAVSCFNLPLMVLASANNQDYLDIADRFDVPLLFEAFADRTYLANGKLTPRSQPNAVLSSEEAILNQVRQIARYGKVTSSDGFVIPIEADTLCVHGDNPNAVSLIARIRAALDE</sequence>
<gene>
    <name evidence="1" type="primary">pxpA</name>
    <name type="ordered locus">VC_A0776</name>
</gene>
<feature type="chain" id="PRO_0000185058" description="5-oxoprolinase subunit A">
    <location>
        <begin position="1"/>
        <end position="246"/>
    </location>
</feature>
<proteinExistence type="inferred from homology"/>
<organism>
    <name type="scientific">Vibrio cholerae serotype O1 (strain ATCC 39315 / El Tor Inaba N16961)</name>
    <dbReference type="NCBI Taxonomy" id="243277"/>
    <lineage>
        <taxon>Bacteria</taxon>
        <taxon>Pseudomonadati</taxon>
        <taxon>Pseudomonadota</taxon>
        <taxon>Gammaproteobacteria</taxon>
        <taxon>Vibrionales</taxon>
        <taxon>Vibrionaceae</taxon>
        <taxon>Vibrio</taxon>
    </lineage>
</organism>
<evidence type="ECO:0000255" key="1">
    <source>
        <dbReference type="HAMAP-Rule" id="MF_00691"/>
    </source>
</evidence>
<keyword id="KW-0067">ATP-binding</keyword>
<keyword id="KW-0378">Hydrolase</keyword>
<keyword id="KW-0547">Nucleotide-binding</keyword>
<keyword id="KW-1185">Reference proteome</keyword>